<comment type="function">
    <text evidence="2">Catalyzes the dehydration of D-galactonate to 2-keto-3-deoxy-D-galactonate.</text>
</comment>
<comment type="catalytic activity">
    <reaction evidence="2">
        <text>D-galactonate = 2-dehydro-3-deoxy-D-galactonate + H2O</text>
        <dbReference type="Rhea" id="RHEA:18649"/>
        <dbReference type="ChEBI" id="CHEBI:12931"/>
        <dbReference type="ChEBI" id="CHEBI:15377"/>
        <dbReference type="ChEBI" id="CHEBI:57989"/>
        <dbReference type="EC" id="4.2.1.6"/>
    </reaction>
</comment>
<comment type="cofactor">
    <cofactor evidence="2">
        <name>Mg(2+)</name>
        <dbReference type="ChEBI" id="CHEBI:18420"/>
    </cofactor>
    <text evidence="2">Binds 1 Mg(2+) ion per subunit.</text>
</comment>
<comment type="pathway">
    <text evidence="2">Carbohydrate acid metabolism; D-galactonate degradation; D-glyceraldehyde 3-phosphate and pyruvate from D-galactonate: step 1/3.</text>
</comment>
<comment type="miscellaneous">
    <text evidence="2">Reaction proceeds via an anti dehydration.</text>
</comment>
<comment type="similarity">
    <text evidence="2">Belongs to the mandelate racemase/muconate lactonizing enzyme family. GalD subfamily.</text>
</comment>
<sequence>MKITKITTYRLPPRWMFLKIETDEGVVGWGEPVIEGRARTVEAAVHELSDYLIGQDPSRINDLWQVMYRAGFYRGGPILMSAIAGIDQALWDIKGKVLNAPVWQLMGGLVRDKIKAYSWVGGDRPADVIDGIKTLREIGFDTFKLNGCEELGLIDNSRAVDAAVNTVAQIREAFGNQIEFGLDFHGRVSAPMAKVLIKELEPYRPLFIEEPVLAEQAEYYPKLAAQTHIPLAAGERMFSRFDFKRVLEAGGISILQPDLSHAGGITECYKIAGMAEAYDVTLAPHCPLGPIALAACLHIDFVSYNAVLQEQSMGIHYNKGAELLDFVKNKEDFSMVGGFFKPLMKPGLGVEIDEAKVIEFSKNAPDWRNPLWRHEDNSVAEW</sequence>
<organism>
    <name type="scientific">Escherichia fergusonii (strain ATCC 35469 / DSM 13698 / CCUG 18766 / IAM 14443 / JCM 21226 / LMG 7866 / NBRC 102419 / NCTC 12128 / CDC 0568-73)</name>
    <dbReference type="NCBI Taxonomy" id="585054"/>
    <lineage>
        <taxon>Bacteria</taxon>
        <taxon>Pseudomonadati</taxon>
        <taxon>Pseudomonadota</taxon>
        <taxon>Gammaproteobacteria</taxon>
        <taxon>Enterobacterales</taxon>
        <taxon>Enterobacteriaceae</taxon>
        <taxon>Escherichia</taxon>
    </lineage>
</organism>
<name>DGOD_ESCF3</name>
<keyword id="KW-0456">Lyase</keyword>
<keyword id="KW-0460">Magnesium</keyword>
<keyword id="KW-0479">Metal-binding</keyword>
<protein>
    <recommendedName>
        <fullName evidence="2">D-galactonate dehydratase</fullName>
        <shortName evidence="2">GalD</shortName>
        <ecNumber evidence="2">4.2.1.6</ecNumber>
    </recommendedName>
</protein>
<feature type="chain" id="PRO_1000140383" description="D-galactonate dehydratase">
    <location>
        <begin position="1"/>
        <end position="382"/>
    </location>
</feature>
<feature type="active site" description="Proton donor" evidence="1">
    <location>
        <position position="185"/>
    </location>
</feature>
<feature type="active site" description="Proton acceptor" evidence="1">
    <location>
        <position position="285"/>
    </location>
</feature>
<feature type="binding site" evidence="2">
    <location>
        <position position="183"/>
    </location>
    <ligand>
        <name>Mg(2+)</name>
        <dbReference type="ChEBI" id="CHEBI:18420"/>
    </ligand>
</feature>
<feature type="binding site" evidence="2">
    <location>
        <position position="209"/>
    </location>
    <ligand>
        <name>Mg(2+)</name>
        <dbReference type="ChEBI" id="CHEBI:18420"/>
    </ligand>
</feature>
<feature type="binding site" evidence="2">
    <location>
        <position position="235"/>
    </location>
    <ligand>
        <name>Mg(2+)</name>
        <dbReference type="ChEBI" id="CHEBI:18420"/>
    </ligand>
</feature>
<feature type="site" description="Increases basicity of active site His" evidence="2">
    <location>
        <position position="258"/>
    </location>
</feature>
<feature type="site" description="Transition state stabilizer" evidence="2">
    <location>
        <position position="310"/>
    </location>
</feature>
<accession>B7LK34</accession>
<evidence type="ECO:0000250" key="1"/>
<evidence type="ECO:0000255" key="2">
    <source>
        <dbReference type="HAMAP-Rule" id="MF_01289"/>
    </source>
</evidence>
<dbReference type="EC" id="4.2.1.6" evidence="2"/>
<dbReference type="EMBL" id="CU928158">
    <property type="protein sequence ID" value="CAQ91421.1"/>
    <property type="molecule type" value="Genomic_DNA"/>
</dbReference>
<dbReference type="RefSeq" id="WP_000705010.1">
    <property type="nucleotide sequence ID" value="NC_011740.1"/>
</dbReference>
<dbReference type="SMR" id="B7LK34"/>
<dbReference type="GeneID" id="75059581"/>
<dbReference type="KEGG" id="efe:EFER_3987"/>
<dbReference type="HOGENOM" id="CLU_030273_3_2_6"/>
<dbReference type="OrthoDB" id="103536at2"/>
<dbReference type="UniPathway" id="UPA00081">
    <property type="reaction ID" value="UER00518"/>
</dbReference>
<dbReference type="Proteomes" id="UP000000745">
    <property type="component" value="Chromosome"/>
</dbReference>
<dbReference type="GO" id="GO:0008869">
    <property type="term" value="F:galactonate dehydratase activity"/>
    <property type="evidence" value="ECO:0007669"/>
    <property type="project" value="UniProtKB-UniRule"/>
</dbReference>
<dbReference type="GO" id="GO:0000287">
    <property type="term" value="F:magnesium ion binding"/>
    <property type="evidence" value="ECO:0007669"/>
    <property type="project" value="UniProtKB-UniRule"/>
</dbReference>
<dbReference type="GO" id="GO:0009063">
    <property type="term" value="P:amino acid catabolic process"/>
    <property type="evidence" value="ECO:0007669"/>
    <property type="project" value="InterPro"/>
</dbReference>
<dbReference type="GO" id="GO:0034194">
    <property type="term" value="P:D-galactonate catabolic process"/>
    <property type="evidence" value="ECO:0007669"/>
    <property type="project" value="UniProtKB-UniRule"/>
</dbReference>
<dbReference type="CDD" id="cd03325">
    <property type="entry name" value="D-galactonate_dehydratase"/>
    <property type="match status" value="1"/>
</dbReference>
<dbReference type="FunFam" id="3.20.20.120:FF:000008">
    <property type="entry name" value="D-galactonate dehydratase"/>
    <property type="match status" value="1"/>
</dbReference>
<dbReference type="FunFam" id="3.30.390.10:FF:000003">
    <property type="entry name" value="D-galactonate dehydratase"/>
    <property type="match status" value="1"/>
</dbReference>
<dbReference type="Gene3D" id="3.20.20.120">
    <property type="entry name" value="Enolase-like C-terminal domain"/>
    <property type="match status" value="1"/>
</dbReference>
<dbReference type="Gene3D" id="3.30.390.10">
    <property type="entry name" value="Enolase-like, N-terminal domain"/>
    <property type="match status" value="1"/>
</dbReference>
<dbReference type="HAMAP" id="MF_01289">
    <property type="entry name" value="Galacton_dehydrat"/>
    <property type="match status" value="1"/>
</dbReference>
<dbReference type="InterPro" id="IPR034593">
    <property type="entry name" value="DgoD-like"/>
</dbReference>
<dbReference type="InterPro" id="IPR036849">
    <property type="entry name" value="Enolase-like_C_sf"/>
</dbReference>
<dbReference type="InterPro" id="IPR029017">
    <property type="entry name" value="Enolase-like_N"/>
</dbReference>
<dbReference type="InterPro" id="IPR029065">
    <property type="entry name" value="Enolase_C-like"/>
</dbReference>
<dbReference type="InterPro" id="IPR023592">
    <property type="entry name" value="Galactonate_deHydtase"/>
</dbReference>
<dbReference type="InterPro" id="IPR018110">
    <property type="entry name" value="Mandel_Rmase/mucon_lact_enz_CS"/>
</dbReference>
<dbReference type="InterPro" id="IPR013342">
    <property type="entry name" value="Mandelate_racemase_C"/>
</dbReference>
<dbReference type="InterPro" id="IPR013341">
    <property type="entry name" value="Mandelate_racemase_N_dom"/>
</dbReference>
<dbReference type="NCBIfam" id="NF010624">
    <property type="entry name" value="PRK14017.1"/>
    <property type="match status" value="1"/>
</dbReference>
<dbReference type="PANTHER" id="PTHR48080:SF2">
    <property type="entry name" value="D-GALACTONATE DEHYDRATASE"/>
    <property type="match status" value="1"/>
</dbReference>
<dbReference type="PANTHER" id="PTHR48080">
    <property type="entry name" value="D-GALACTONATE DEHYDRATASE-RELATED"/>
    <property type="match status" value="1"/>
</dbReference>
<dbReference type="Pfam" id="PF13378">
    <property type="entry name" value="MR_MLE_C"/>
    <property type="match status" value="1"/>
</dbReference>
<dbReference type="Pfam" id="PF02746">
    <property type="entry name" value="MR_MLE_N"/>
    <property type="match status" value="1"/>
</dbReference>
<dbReference type="SFLD" id="SFLDF00003">
    <property type="entry name" value="D-galactonate_dehydratase"/>
    <property type="match status" value="1"/>
</dbReference>
<dbReference type="SFLD" id="SFLDG00179">
    <property type="entry name" value="mandelate_racemase"/>
    <property type="match status" value="1"/>
</dbReference>
<dbReference type="SMART" id="SM00922">
    <property type="entry name" value="MR_MLE"/>
    <property type="match status" value="1"/>
</dbReference>
<dbReference type="SUPFAM" id="SSF51604">
    <property type="entry name" value="Enolase C-terminal domain-like"/>
    <property type="match status" value="1"/>
</dbReference>
<dbReference type="SUPFAM" id="SSF54826">
    <property type="entry name" value="Enolase N-terminal domain-like"/>
    <property type="match status" value="1"/>
</dbReference>
<dbReference type="PROSITE" id="PS00908">
    <property type="entry name" value="MR_MLE_1"/>
    <property type="match status" value="1"/>
</dbReference>
<dbReference type="PROSITE" id="PS00909">
    <property type="entry name" value="MR_MLE_2"/>
    <property type="match status" value="1"/>
</dbReference>
<reference key="1">
    <citation type="journal article" date="2009" name="PLoS Genet.">
        <title>Organised genome dynamics in the Escherichia coli species results in highly diverse adaptive paths.</title>
        <authorList>
            <person name="Touchon M."/>
            <person name="Hoede C."/>
            <person name="Tenaillon O."/>
            <person name="Barbe V."/>
            <person name="Baeriswyl S."/>
            <person name="Bidet P."/>
            <person name="Bingen E."/>
            <person name="Bonacorsi S."/>
            <person name="Bouchier C."/>
            <person name="Bouvet O."/>
            <person name="Calteau A."/>
            <person name="Chiapello H."/>
            <person name="Clermont O."/>
            <person name="Cruveiller S."/>
            <person name="Danchin A."/>
            <person name="Diard M."/>
            <person name="Dossat C."/>
            <person name="Karoui M.E."/>
            <person name="Frapy E."/>
            <person name="Garry L."/>
            <person name="Ghigo J.M."/>
            <person name="Gilles A.M."/>
            <person name="Johnson J."/>
            <person name="Le Bouguenec C."/>
            <person name="Lescat M."/>
            <person name="Mangenot S."/>
            <person name="Martinez-Jehanne V."/>
            <person name="Matic I."/>
            <person name="Nassif X."/>
            <person name="Oztas S."/>
            <person name="Petit M.A."/>
            <person name="Pichon C."/>
            <person name="Rouy Z."/>
            <person name="Ruf C.S."/>
            <person name="Schneider D."/>
            <person name="Tourret J."/>
            <person name="Vacherie B."/>
            <person name="Vallenet D."/>
            <person name="Medigue C."/>
            <person name="Rocha E.P.C."/>
            <person name="Denamur E."/>
        </authorList>
    </citation>
    <scope>NUCLEOTIDE SEQUENCE [LARGE SCALE GENOMIC DNA]</scope>
    <source>
        <strain>ATCC 35469 / DSM 13698 / BCRC 15582 / CCUG 18766 / IAM 14443 / JCM 21226 / LMG 7866 / NBRC 102419 / NCTC 12128 / CDC 0568-73</strain>
    </source>
</reference>
<proteinExistence type="inferred from homology"/>
<gene>
    <name evidence="2" type="primary">dgoD</name>
    <name type="ordered locus">EFER_3987</name>
</gene>